<dbReference type="EC" id="1.5.1.5" evidence="1"/>
<dbReference type="EC" id="3.5.4.9" evidence="1"/>
<dbReference type="EMBL" id="BX908798">
    <property type="protein sequence ID" value="CAF24425.1"/>
    <property type="molecule type" value="Genomic_DNA"/>
</dbReference>
<dbReference type="RefSeq" id="WP_011176246.1">
    <property type="nucleotide sequence ID" value="NC_005861.2"/>
</dbReference>
<dbReference type="SMR" id="Q6MAH4"/>
<dbReference type="STRING" id="264201.pc1701"/>
<dbReference type="KEGG" id="pcu:PC_RS08145"/>
<dbReference type="eggNOG" id="COG0190">
    <property type="taxonomic scope" value="Bacteria"/>
</dbReference>
<dbReference type="HOGENOM" id="CLU_034045_1_2_0"/>
<dbReference type="OrthoDB" id="9803580at2"/>
<dbReference type="UniPathway" id="UPA00193"/>
<dbReference type="Proteomes" id="UP000000529">
    <property type="component" value="Chromosome"/>
</dbReference>
<dbReference type="GO" id="GO:0005829">
    <property type="term" value="C:cytosol"/>
    <property type="evidence" value="ECO:0007669"/>
    <property type="project" value="TreeGrafter"/>
</dbReference>
<dbReference type="GO" id="GO:0004477">
    <property type="term" value="F:methenyltetrahydrofolate cyclohydrolase activity"/>
    <property type="evidence" value="ECO:0007669"/>
    <property type="project" value="UniProtKB-UniRule"/>
</dbReference>
<dbReference type="GO" id="GO:0004488">
    <property type="term" value="F:methylenetetrahydrofolate dehydrogenase (NADP+) activity"/>
    <property type="evidence" value="ECO:0007669"/>
    <property type="project" value="UniProtKB-UniRule"/>
</dbReference>
<dbReference type="GO" id="GO:0000105">
    <property type="term" value="P:L-histidine biosynthetic process"/>
    <property type="evidence" value="ECO:0007669"/>
    <property type="project" value="UniProtKB-KW"/>
</dbReference>
<dbReference type="GO" id="GO:0009086">
    <property type="term" value="P:methionine biosynthetic process"/>
    <property type="evidence" value="ECO:0007669"/>
    <property type="project" value="UniProtKB-KW"/>
</dbReference>
<dbReference type="GO" id="GO:0006164">
    <property type="term" value="P:purine nucleotide biosynthetic process"/>
    <property type="evidence" value="ECO:0007669"/>
    <property type="project" value="UniProtKB-KW"/>
</dbReference>
<dbReference type="GO" id="GO:0035999">
    <property type="term" value="P:tetrahydrofolate interconversion"/>
    <property type="evidence" value="ECO:0007669"/>
    <property type="project" value="UniProtKB-UniRule"/>
</dbReference>
<dbReference type="CDD" id="cd01080">
    <property type="entry name" value="NAD_bind_m-THF_DH_Cyclohyd"/>
    <property type="match status" value="1"/>
</dbReference>
<dbReference type="FunFam" id="3.40.50.720:FF:000189">
    <property type="entry name" value="Bifunctional protein FolD"/>
    <property type="match status" value="1"/>
</dbReference>
<dbReference type="FunFam" id="3.40.50.10860:FF:000005">
    <property type="entry name" value="C-1-tetrahydrofolate synthase, cytoplasmic, putative"/>
    <property type="match status" value="1"/>
</dbReference>
<dbReference type="Gene3D" id="3.40.50.10860">
    <property type="entry name" value="Leucine Dehydrogenase, chain A, domain 1"/>
    <property type="match status" value="1"/>
</dbReference>
<dbReference type="Gene3D" id="3.40.50.720">
    <property type="entry name" value="NAD(P)-binding Rossmann-like Domain"/>
    <property type="match status" value="1"/>
</dbReference>
<dbReference type="HAMAP" id="MF_01576">
    <property type="entry name" value="THF_DHG_CYH"/>
    <property type="match status" value="1"/>
</dbReference>
<dbReference type="InterPro" id="IPR046346">
    <property type="entry name" value="Aminoacid_DH-like_N_sf"/>
</dbReference>
<dbReference type="InterPro" id="IPR036291">
    <property type="entry name" value="NAD(P)-bd_dom_sf"/>
</dbReference>
<dbReference type="InterPro" id="IPR000672">
    <property type="entry name" value="THF_DH/CycHdrlase"/>
</dbReference>
<dbReference type="InterPro" id="IPR020630">
    <property type="entry name" value="THF_DH/CycHdrlase_cat_dom"/>
</dbReference>
<dbReference type="InterPro" id="IPR020867">
    <property type="entry name" value="THF_DH/CycHdrlase_CS"/>
</dbReference>
<dbReference type="InterPro" id="IPR020631">
    <property type="entry name" value="THF_DH/CycHdrlase_NAD-bd_dom"/>
</dbReference>
<dbReference type="NCBIfam" id="NF010783">
    <property type="entry name" value="PRK14186.1"/>
    <property type="match status" value="1"/>
</dbReference>
<dbReference type="PANTHER" id="PTHR48099:SF5">
    <property type="entry name" value="C-1-TETRAHYDROFOLATE SYNTHASE, CYTOPLASMIC"/>
    <property type="match status" value="1"/>
</dbReference>
<dbReference type="PANTHER" id="PTHR48099">
    <property type="entry name" value="C-1-TETRAHYDROFOLATE SYNTHASE, CYTOPLASMIC-RELATED"/>
    <property type="match status" value="1"/>
</dbReference>
<dbReference type="Pfam" id="PF00763">
    <property type="entry name" value="THF_DHG_CYH"/>
    <property type="match status" value="1"/>
</dbReference>
<dbReference type="Pfam" id="PF02882">
    <property type="entry name" value="THF_DHG_CYH_C"/>
    <property type="match status" value="1"/>
</dbReference>
<dbReference type="PRINTS" id="PR00085">
    <property type="entry name" value="THFDHDRGNASE"/>
</dbReference>
<dbReference type="SUPFAM" id="SSF53223">
    <property type="entry name" value="Aminoacid dehydrogenase-like, N-terminal domain"/>
    <property type="match status" value="1"/>
</dbReference>
<dbReference type="SUPFAM" id="SSF51735">
    <property type="entry name" value="NAD(P)-binding Rossmann-fold domains"/>
    <property type="match status" value="1"/>
</dbReference>
<dbReference type="PROSITE" id="PS00766">
    <property type="entry name" value="THF_DHG_CYH_1"/>
    <property type="match status" value="1"/>
</dbReference>
<dbReference type="PROSITE" id="PS00767">
    <property type="entry name" value="THF_DHG_CYH_2"/>
    <property type="match status" value="1"/>
</dbReference>
<reference key="1">
    <citation type="journal article" date="2004" name="Science">
        <title>Illuminating the evolutionary history of chlamydiae.</title>
        <authorList>
            <person name="Horn M."/>
            <person name="Collingro A."/>
            <person name="Schmitz-Esser S."/>
            <person name="Beier C.L."/>
            <person name="Purkhold U."/>
            <person name="Fartmann B."/>
            <person name="Brandt P."/>
            <person name="Nyakatura G.J."/>
            <person name="Droege M."/>
            <person name="Frishman D."/>
            <person name="Rattei T."/>
            <person name="Mewes H.-W."/>
            <person name="Wagner M."/>
        </authorList>
    </citation>
    <scope>NUCLEOTIDE SEQUENCE [LARGE SCALE GENOMIC DNA]</scope>
    <source>
        <strain>UWE25</strain>
    </source>
</reference>
<gene>
    <name evidence="1" type="primary">folD</name>
    <name type="ordered locus">pc1701</name>
</gene>
<keyword id="KW-0028">Amino-acid biosynthesis</keyword>
<keyword id="KW-0368">Histidine biosynthesis</keyword>
<keyword id="KW-0378">Hydrolase</keyword>
<keyword id="KW-0486">Methionine biosynthesis</keyword>
<keyword id="KW-0511">Multifunctional enzyme</keyword>
<keyword id="KW-0521">NADP</keyword>
<keyword id="KW-0554">One-carbon metabolism</keyword>
<keyword id="KW-0560">Oxidoreductase</keyword>
<keyword id="KW-0658">Purine biosynthesis</keyword>
<keyword id="KW-1185">Reference proteome</keyword>
<feature type="chain" id="PRO_0000268440" description="Bifunctional protein FolD">
    <location>
        <begin position="1"/>
        <end position="292"/>
    </location>
</feature>
<feature type="binding site" evidence="1">
    <location>
        <begin position="161"/>
        <end position="163"/>
    </location>
    <ligand>
        <name>NADP(+)</name>
        <dbReference type="ChEBI" id="CHEBI:58349"/>
    </ligand>
</feature>
<feature type="binding site" evidence="1">
    <location>
        <position position="231"/>
    </location>
    <ligand>
        <name>NADP(+)</name>
        <dbReference type="ChEBI" id="CHEBI:58349"/>
    </ligand>
</feature>
<sequence length="292" mass="31744">MIIDGKRIAEEIQLEIKELIQQSLCRPPCLAVLIVGSHPASQIYVNRKTAACKAVGIASIKCELPFTISEEELIREVEKLNVDPQIDGILVQLPLPPHINSNRVNYHIDPQKDVDGFHPLNVGKMLIGELDGFLPCTPFGIKTLLERTGIEVCGKHALIIGRSNIVGKPMAALLMQSYPGGNATVTVAHRYTKNLKELCLQADLIIVAIGQPKLITADMVKEGVIIVDVGINKIHDSSKKNGYQIVGDVDFVNVAPKCAFITPVPGGVGPMTIAMLLYNTLLSYSKSQNLNL</sequence>
<organism>
    <name type="scientific">Protochlamydia amoebophila (strain UWE25)</name>
    <dbReference type="NCBI Taxonomy" id="264201"/>
    <lineage>
        <taxon>Bacteria</taxon>
        <taxon>Pseudomonadati</taxon>
        <taxon>Chlamydiota</taxon>
        <taxon>Chlamydiia</taxon>
        <taxon>Parachlamydiales</taxon>
        <taxon>Parachlamydiaceae</taxon>
        <taxon>Candidatus Protochlamydia</taxon>
    </lineage>
</organism>
<evidence type="ECO:0000255" key="1">
    <source>
        <dbReference type="HAMAP-Rule" id="MF_01576"/>
    </source>
</evidence>
<comment type="function">
    <text evidence="1">Catalyzes the oxidation of 5,10-methylenetetrahydrofolate to 5,10-methenyltetrahydrofolate and then the hydrolysis of 5,10-methenyltetrahydrofolate to 10-formyltetrahydrofolate.</text>
</comment>
<comment type="catalytic activity">
    <reaction evidence="1">
        <text>(6R)-5,10-methylene-5,6,7,8-tetrahydrofolate + NADP(+) = (6R)-5,10-methenyltetrahydrofolate + NADPH</text>
        <dbReference type="Rhea" id="RHEA:22812"/>
        <dbReference type="ChEBI" id="CHEBI:15636"/>
        <dbReference type="ChEBI" id="CHEBI:57455"/>
        <dbReference type="ChEBI" id="CHEBI:57783"/>
        <dbReference type="ChEBI" id="CHEBI:58349"/>
        <dbReference type="EC" id="1.5.1.5"/>
    </reaction>
</comment>
<comment type="catalytic activity">
    <reaction evidence="1">
        <text>(6R)-5,10-methenyltetrahydrofolate + H2O = (6R)-10-formyltetrahydrofolate + H(+)</text>
        <dbReference type="Rhea" id="RHEA:23700"/>
        <dbReference type="ChEBI" id="CHEBI:15377"/>
        <dbReference type="ChEBI" id="CHEBI:15378"/>
        <dbReference type="ChEBI" id="CHEBI:57455"/>
        <dbReference type="ChEBI" id="CHEBI:195366"/>
        <dbReference type="EC" id="3.5.4.9"/>
    </reaction>
</comment>
<comment type="pathway">
    <text evidence="1">One-carbon metabolism; tetrahydrofolate interconversion.</text>
</comment>
<comment type="subunit">
    <text evidence="1">Homodimer.</text>
</comment>
<comment type="similarity">
    <text evidence="1">Belongs to the tetrahydrofolate dehydrogenase/cyclohydrolase family.</text>
</comment>
<protein>
    <recommendedName>
        <fullName evidence="1">Bifunctional protein FolD</fullName>
    </recommendedName>
    <domain>
        <recommendedName>
            <fullName evidence="1">Methylenetetrahydrofolate dehydrogenase</fullName>
            <ecNumber evidence="1">1.5.1.5</ecNumber>
        </recommendedName>
    </domain>
    <domain>
        <recommendedName>
            <fullName evidence="1">Methenyltetrahydrofolate cyclohydrolase</fullName>
            <ecNumber evidence="1">3.5.4.9</ecNumber>
        </recommendedName>
    </domain>
</protein>
<name>FOLD_PARUW</name>
<accession>Q6MAH4</accession>
<proteinExistence type="inferred from homology"/>